<protein>
    <recommendedName>
        <fullName evidence="1">Bifunctional protein GlmU</fullName>
    </recommendedName>
    <domain>
        <recommendedName>
            <fullName evidence="1">UDP-N-acetylglucosamine pyrophosphorylase</fullName>
            <ecNumber evidence="1">2.7.7.23</ecNumber>
        </recommendedName>
        <alternativeName>
            <fullName evidence="1">N-acetylglucosamine-1-phosphate uridyltransferase</fullName>
        </alternativeName>
    </domain>
    <domain>
        <recommendedName>
            <fullName evidence="1">Glucosamine-1-phosphate N-acetyltransferase</fullName>
            <ecNumber evidence="1">2.3.1.157</ecNumber>
        </recommendedName>
    </domain>
</protein>
<accession>Q0SYU6</accession>
<comment type="function">
    <text evidence="1">Catalyzes the last two sequential reactions in the de novo biosynthetic pathway for UDP-N-acetylglucosamine (UDP-GlcNAc). The C-terminal domain catalyzes the transfer of acetyl group from acetyl coenzyme A to glucosamine-1-phosphate (GlcN-1-P) to produce N-acetylglucosamine-1-phosphate (GlcNAc-1-P), which is converted into UDP-GlcNAc by the transfer of uridine 5-monophosphate (from uridine 5-triphosphate), a reaction catalyzed by the N-terminal domain.</text>
</comment>
<comment type="catalytic activity">
    <reaction evidence="1">
        <text>alpha-D-glucosamine 1-phosphate + acetyl-CoA = N-acetyl-alpha-D-glucosamine 1-phosphate + CoA + H(+)</text>
        <dbReference type="Rhea" id="RHEA:13725"/>
        <dbReference type="ChEBI" id="CHEBI:15378"/>
        <dbReference type="ChEBI" id="CHEBI:57287"/>
        <dbReference type="ChEBI" id="CHEBI:57288"/>
        <dbReference type="ChEBI" id="CHEBI:57776"/>
        <dbReference type="ChEBI" id="CHEBI:58516"/>
        <dbReference type="EC" id="2.3.1.157"/>
    </reaction>
</comment>
<comment type="catalytic activity">
    <reaction evidence="1">
        <text>N-acetyl-alpha-D-glucosamine 1-phosphate + UTP + H(+) = UDP-N-acetyl-alpha-D-glucosamine + diphosphate</text>
        <dbReference type="Rhea" id="RHEA:13509"/>
        <dbReference type="ChEBI" id="CHEBI:15378"/>
        <dbReference type="ChEBI" id="CHEBI:33019"/>
        <dbReference type="ChEBI" id="CHEBI:46398"/>
        <dbReference type="ChEBI" id="CHEBI:57705"/>
        <dbReference type="ChEBI" id="CHEBI:57776"/>
        <dbReference type="EC" id="2.7.7.23"/>
    </reaction>
</comment>
<comment type="cofactor">
    <cofactor evidence="1">
        <name>Mg(2+)</name>
        <dbReference type="ChEBI" id="CHEBI:18420"/>
    </cofactor>
    <text evidence="1">Binds 1 Mg(2+) ion per subunit.</text>
</comment>
<comment type="pathway">
    <text evidence="1">Nucleotide-sugar biosynthesis; UDP-N-acetyl-alpha-D-glucosamine biosynthesis; N-acetyl-alpha-D-glucosamine 1-phosphate from alpha-D-glucosamine 6-phosphate (route II): step 2/2.</text>
</comment>
<comment type="pathway">
    <text evidence="1">Nucleotide-sugar biosynthesis; UDP-N-acetyl-alpha-D-glucosamine biosynthesis; UDP-N-acetyl-alpha-D-glucosamine from N-acetyl-alpha-D-glucosamine 1-phosphate: step 1/1.</text>
</comment>
<comment type="pathway">
    <text evidence="1">Bacterial outer membrane biogenesis; LPS lipid A biosynthesis.</text>
</comment>
<comment type="subunit">
    <text evidence="1">Homotrimer.</text>
</comment>
<comment type="subcellular location">
    <subcellularLocation>
        <location evidence="1">Cytoplasm</location>
    </subcellularLocation>
</comment>
<comment type="similarity">
    <text evidence="1">In the N-terminal section; belongs to the N-acetylglucosamine-1-phosphate uridyltransferase family.</text>
</comment>
<comment type="similarity">
    <text evidence="1">In the C-terminal section; belongs to the transferase hexapeptide repeat family.</text>
</comment>
<evidence type="ECO:0000255" key="1">
    <source>
        <dbReference type="HAMAP-Rule" id="MF_01631"/>
    </source>
</evidence>
<name>GLMU_SHIF8</name>
<proteinExistence type="inferred from homology"/>
<feature type="chain" id="PRO_1000056201" description="Bifunctional protein GlmU">
    <location>
        <begin position="1"/>
        <end position="456"/>
    </location>
</feature>
<feature type="region of interest" description="Pyrophosphorylase" evidence="1">
    <location>
        <begin position="1"/>
        <end position="229"/>
    </location>
</feature>
<feature type="region of interest" description="Linker" evidence="1">
    <location>
        <begin position="230"/>
        <end position="250"/>
    </location>
</feature>
<feature type="region of interest" description="N-acetyltransferase" evidence="1">
    <location>
        <begin position="251"/>
        <end position="456"/>
    </location>
</feature>
<feature type="active site" description="Proton acceptor" evidence="1">
    <location>
        <position position="363"/>
    </location>
</feature>
<feature type="binding site" evidence="1">
    <location>
        <begin position="11"/>
        <end position="14"/>
    </location>
    <ligand>
        <name>UDP-N-acetyl-alpha-D-glucosamine</name>
        <dbReference type="ChEBI" id="CHEBI:57705"/>
    </ligand>
</feature>
<feature type="binding site" evidence="1">
    <location>
        <position position="25"/>
    </location>
    <ligand>
        <name>UDP-N-acetyl-alpha-D-glucosamine</name>
        <dbReference type="ChEBI" id="CHEBI:57705"/>
    </ligand>
</feature>
<feature type="binding site" evidence="1">
    <location>
        <position position="76"/>
    </location>
    <ligand>
        <name>UDP-N-acetyl-alpha-D-glucosamine</name>
        <dbReference type="ChEBI" id="CHEBI:57705"/>
    </ligand>
</feature>
<feature type="binding site" evidence="1">
    <location>
        <begin position="81"/>
        <end position="82"/>
    </location>
    <ligand>
        <name>UDP-N-acetyl-alpha-D-glucosamine</name>
        <dbReference type="ChEBI" id="CHEBI:57705"/>
    </ligand>
</feature>
<feature type="binding site" evidence="1">
    <location>
        <begin position="103"/>
        <end position="105"/>
    </location>
    <ligand>
        <name>UDP-N-acetyl-alpha-D-glucosamine</name>
        <dbReference type="ChEBI" id="CHEBI:57705"/>
    </ligand>
</feature>
<feature type="binding site" evidence="1">
    <location>
        <position position="105"/>
    </location>
    <ligand>
        <name>Mg(2+)</name>
        <dbReference type="ChEBI" id="CHEBI:18420"/>
    </ligand>
</feature>
<feature type="binding site" evidence="1">
    <location>
        <position position="140"/>
    </location>
    <ligand>
        <name>UDP-N-acetyl-alpha-D-glucosamine</name>
        <dbReference type="ChEBI" id="CHEBI:57705"/>
    </ligand>
</feature>
<feature type="binding site" evidence="1">
    <location>
        <position position="154"/>
    </location>
    <ligand>
        <name>UDP-N-acetyl-alpha-D-glucosamine</name>
        <dbReference type="ChEBI" id="CHEBI:57705"/>
    </ligand>
</feature>
<feature type="binding site" evidence="1">
    <location>
        <position position="169"/>
    </location>
    <ligand>
        <name>UDP-N-acetyl-alpha-D-glucosamine</name>
        <dbReference type="ChEBI" id="CHEBI:57705"/>
    </ligand>
</feature>
<feature type="binding site" evidence="1">
    <location>
        <position position="227"/>
    </location>
    <ligand>
        <name>Mg(2+)</name>
        <dbReference type="ChEBI" id="CHEBI:18420"/>
    </ligand>
</feature>
<feature type="binding site" evidence="1">
    <location>
        <position position="227"/>
    </location>
    <ligand>
        <name>UDP-N-acetyl-alpha-D-glucosamine</name>
        <dbReference type="ChEBI" id="CHEBI:57705"/>
    </ligand>
</feature>
<feature type="binding site" evidence="1">
    <location>
        <position position="333"/>
    </location>
    <ligand>
        <name>UDP-N-acetyl-alpha-D-glucosamine</name>
        <dbReference type="ChEBI" id="CHEBI:57705"/>
    </ligand>
</feature>
<feature type="binding site" evidence="1">
    <location>
        <position position="351"/>
    </location>
    <ligand>
        <name>UDP-N-acetyl-alpha-D-glucosamine</name>
        <dbReference type="ChEBI" id="CHEBI:57705"/>
    </ligand>
</feature>
<feature type="binding site" evidence="1">
    <location>
        <position position="366"/>
    </location>
    <ligand>
        <name>UDP-N-acetyl-alpha-D-glucosamine</name>
        <dbReference type="ChEBI" id="CHEBI:57705"/>
    </ligand>
</feature>
<feature type="binding site" evidence="1">
    <location>
        <position position="377"/>
    </location>
    <ligand>
        <name>UDP-N-acetyl-alpha-D-glucosamine</name>
        <dbReference type="ChEBI" id="CHEBI:57705"/>
    </ligand>
</feature>
<feature type="binding site" evidence="1">
    <location>
        <position position="380"/>
    </location>
    <ligand>
        <name>acetyl-CoA</name>
        <dbReference type="ChEBI" id="CHEBI:57288"/>
    </ligand>
</feature>
<feature type="binding site" evidence="1">
    <location>
        <begin position="386"/>
        <end position="387"/>
    </location>
    <ligand>
        <name>acetyl-CoA</name>
        <dbReference type="ChEBI" id="CHEBI:57288"/>
    </ligand>
</feature>
<feature type="binding site" evidence="1">
    <location>
        <position position="405"/>
    </location>
    <ligand>
        <name>acetyl-CoA</name>
        <dbReference type="ChEBI" id="CHEBI:57288"/>
    </ligand>
</feature>
<feature type="binding site" evidence="1">
    <location>
        <position position="423"/>
    </location>
    <ligand>
        <name>acetyl-CoA</name>
        <dbReference type="ChEBI" id="CHEBI:57288"/>
    </ligand>
</feature>
<feature type="binding site" evidence="1">
    <location>
        <position position="440"/>
    </location>
    <ligand>
        <name>acetyl-CoA</name>
        <dbReference type="ChEBI" id="CHEBI:57288"/>
    </ligand>
</feature>
<reference key="1">
    <citation type="journal article" date="2006" name="BMC Genomics">
        <title>Complete genome sequence of Shigella flexneri 5b and comparison with Shigella flexneri 2a.</title>
        <authorList>
            <person name="Nie H."/>
            <person name="Yang F."/>
            <person name="Zhang X."/>
            <person name="Yang J."/>
            <person name="Chen L."/>
            <person name="Wang J."/>
            <person name="Xiong Z."/>
            <person name="Peng J."/>
            <person name="Sun L."/>
            <person name="Dong J."/>
            <person name="Xue Y."/>
            <person name="Xu X."/>
            <person name="Chen S."/>
            <person name="Yao Z."/>
            <person name="Shen Y."/>
            <person name="Jin Q."/>
        </authorList>
    </citation>
    <scope>NUCLEOTIDE SEQUENCE [LARGE SCALE GENOMIC DNA]</scope>
    <source>
        <strain>8401</strain>
    </source>
</reference>
<keyword id="KW-0012">Acyltransferase</keyword>
<keyword id="KW-0133">Cell shape</keyword>
<keyword id="KW-0961">Cell wall biogenesis/degradation</keyword>
<keyword id="KW-0963">Cytoplasm</keyword>
<keyword id="KW-0460">Magnesium</keyword>
<keyword id="KW-0479">Metal-binding</keyword>
<keyword id="KW-0511">Multifunctional enzyme</keyword>
<keyword id="KW-0548">Nucleotidyltransferase</keyword>
<keyword id="KW-0573">Peptidoglycan synthesis</keyword>
<keyword id="KW-0677">Repeat</keyword>
<keyword id="KW-0808">Transferase</keyword>
<dbReference type="EC" id="2.7.7.23" evidence="1"/>
<dbReference type="EC" id="2.3.1.157" evidence="1"/>
<dbReference type="EMBL" id="CP000266">
    <property type="protein sequence ID" value="ABF05769.1"/>
    <property type="molecule type" value="Genomic_DNA"/>
</dbReference>
<dbReference type="RefSeq" id="WP_000933743.1">
    <property type="nucleotide sequence ID" value="NC_008258.1"/>
</dbReference>
<dbReference type="SMR" id="Q0SYU6"/>
<dbReference type="KEGG" id="sfv:SFV_3756"/>
<dbReference type="HOGENOM" id="CLU_029499_15_2_6"/>
<dbReference type="UniPathway" id="UPA00113">
    <property type="reaction ID" value="UER00532"/>
</dbReference>
<dbReference type="UniPathway" id="UPA00113">
    <property type="reaction ID" value="UER00533"/>
</dbReference>
<dbReference type="UniPathway" id="UPA00973"/>
<dbReference type="Proteomes" id="UP000000659">
    <property type="component" value="Chromosome"/>
</dbReference>
<dbReference type="GO" id="GO:0005737">
    <property type="term" value="C:cytoplasm"/>
    <property type="evidence" value="ECO:0007669"/>
    <property type="project" value="UniProtKB-SubCell"/>
</dbReference>
<dbReference type="GO" id="GO:0016020">
    <property type="term" value="C:membrane"/>
    <property type="evidence" value="ECO:0007669"/>
    <property type="project" value="GOC"/>
</dbReference>
<dbReference type="GO" id="GO:0019134">
    <property type="term" value="F:glucosamine-1-phosphate N-acetyltransferase activity"/>
    <property type="evidence" value="ECO:0007669"/>
    <property type="project" value="UniProtKB-UniRule"/>
</dbReference>
<dbReference type="GO" id="GO:0000287">
    <property type="term" value="F:magnesium ion binding"/>
    <property type="evidence" value="ECO:0007669"/>
    <property type="project" value="UniProtKB-UniRule"/>
</dbReference>
<dbReference type="GO" id="GO:0003977">
    <property type="term" value="F:UDP-N-acetylglucosamine diphosphorylase activity"/>
    <property type="evidence" value="ECO:0007669"/>
    <property type="project" value="UniProtKB-UniRule"/>
</dbReference>
<dbReference type="GO" id="GO:0000902">
    <property type="term" value="P:cell morphogenesis"/>
    <property type="evidence" value="ECO:0007669"/>
    <property type="project" value="UniProtKB-UniRule"/>
</dbReference>
<dbReference type="GO" id="GO:0071555">
    <property type="term" value="P:cell wall organization"/>
    <property type="evidence" value="ECO:0007669"/>
    <property type="project" value="UniProtKB-KW"/>
</dbReference>
<dbReference type="GO" id="GO:0009245">
    <property type="term" value="P:lipid A biosynthetic process"/>
    <property type="evidence" value="ECO:0007669"/>
    <property type="project" value="UniProtKB-UniRule"/>
</dbReference>
<dbReference type="GO" id="GO:0009252">
    <property type="term" value="P:peptidoglycan biosynthetic process"/>
    <property type="evidence" value="ECO:0007669"/>
    <property type="project" value="UniProtKB-UniRule"/>
</dbReference>
<dbReference type="GO" id="GO:0008360">
    <property type="term" value="P:regulation of cell shape"/>
    <property type="evidence" value="ECO:0007669"/>
    <property type="project" value="UniProtKB-KW"/>
</dbReference>
<dbReference type="GO" id="GO:0006048">
    <property type="term" value="P:UDP-N-acetylglucosamine biosynthetic process"/>
    <property type="evidence" value="ECO:0007669"/>
    <property type="project" value="UniProtKB-UniPathway"/>
</dbReference>
<dbReference type="CDD" id="cd02540">
    <property type="entry name" value="GT2_GlmU_N_bac"/>
    <property type="match status" value="1"/>
</dbReference>
<dbReference type="CDD" id="cd03353">
    <property type="entry name" value="LbH_GlmU_C"/>
    <property type="match status" value="1"/>
</dbReference>
<dbReference type="FunFam" id="2.160.10.10:FF:000011">
    <property type="entry name" value="Bifunctional protein GlmU"/>
    <property type="match status" value="1"/>
</dbReference>
<dbReference type="FunFam" id="3.90.550.10:FF:000006">
    <property type="entry name" value="Bifunctional protein GlmU"/>
    <property type="match status" value="1"/>
</dbReference>
<dbReference type="Gene3D" id="2.160.10.10">
    <property type="entry name" value="Hexapeptide repeat proteins"/>
    <property type="match status" value="1"/>
</dbReference>
<dbReference type="Gene3D" id="3.90.550.10">
    <property type="entry name" value="Spore Coat Polysaccharide Biosynthesis Protein SpsA, Chain A"/>
    <property type="match status" value="1"/>
</dbReference>
<dbReference type="HAMAP" id="MF_01631">
    <property type="entry name" value="GlmU"/>
    <property type="match status" value="1"/>
</dbReference>
<dbReference type="InterPro" id="IPR005882">
    <property type="entry name" value="Bifunctional_GlmU"/>
</dbReference>
<dbReference type="InterPro" id="IPR050065">
    <property type="entry name" value="GlmU-like"/>
</dbReference>
<dbReference type="InterPro" id="IPR038009">
    <property type="entry name" value="GlmU_C_LbH"/>
</dbReference>
<dbReference type="InterPro" id="IPR001451">
    <property type="entry name" value="Hexapep"/>
</dbReference>
<dbReference type="InterPro" id="IPR018357">
    <property type="entry name" value="Hexapep_transf_CS"/>
</dbReference>
<dbReference type="InterPro" id="IPR025877">
    <property type="entry name" value="MobA-like_NTP_Trfase"/>
</dbReference>
<dbReference type="InterPro" id="IPR029044">
    <property type="entry name" value="Nucleotide-diphossugar_trans"/>
</dbReference>
<dbReference type="InterPro" id="IPR011004">
    <property type="entry name" value="Trimer_LpxA-like_sf"/>
</dbReference>
<dbReference type="NCBIfam" id="TIGR01173">
    <property type="entry name" value="glmU"/>
    <property type="match status" value="1"/>
</dbReference>
<dbReference type="NCBIfam" id="NF006986">
    <property type="entry name" value="PRK09451.1"/>
    <property type="match status" value="1"/>
</dbReference>
<dbReference type="PANTHER" id="PTHR43584:SF3">
    <property type="entry name" value="BIFUNCTIONAL PROTEIN GLMU"/>
    <property type="match status" value="1"/>
</dbReference>
<dbReference type="PANTHER" id="PTHR43584">
    <property type="entry name" value="NUCLEOTIDYL TRANSFERASE"/>
    <property type="match status" value="1"/>
</dbReference>
<dbReference type="Pfam" id="PF00132">
    <property type="entry name" value="Hexapep"/>
    <property type="match status" value="1"/>
</dbReference>
<dbReference type="Pfam" id="PF12804">
    <property type="entry name" value="NTP_transf_3"/>
    <property type="match status" value="1"/>
</dbReference>
<dbReference type="SUPFAM" id="SSF53448">
    <property type="entry name" value="Nucleotide-diphospho-sugar transferases"/>
    <property type="match status" value="1"/>
</dbReference>
<dbReference type="SUPFAM" id="SSF51161">
    <property type="entry name" value="Trimeric LpxA-like enzymes"/>
    <property type="match status" value="1"/>
</dbReference>
<dbReference type="PROSITE" id="PS00101">
    <property type="entry name" value="HEXAPEP_TRANSFERASES"/>
    <property type="match status" value="1"/>
</dbReference>
<sequence>MLNNAMSVVILAAGKGTRMYSDLPKVLHTLAGKAMVQHVIDAANELGAAHVHLVYGHGGDLLKQALKDDNLNWVLQAEQLGTGHAMQQAAPFFADDEDILMLYGDVPLISVETLQRLRDAKPQGGIGLLTVKLDDPTGYGRITRENGKVTGIVEHKDATDEQRQIQEINTGILIANGADMKRWLAKLTNNNAQGEYYITDIIALAYQEGREIVAVHPQRLSEVEGVNNRLQLSRLERVYQSEQAEKLLLAGVMLRDPARFDLRGTLTHGRDVEIDTNVIIEGNVTLGHRVKIGTGCVIKNSVIGDDCEISPYTVVEDANLAAACTIGPFARLRPGAELLEGAHVGNFVEMKKARLGKGTKAGHLTYLGDAEIGDNVNIGAGTITCNYDGANKFKTIIGDDVFVGSDTQLVAPVTVGKGATIAAGTTVTRNVGENALAISRVPQTQKEGWRRPVKKK</sequence>
<gene>
    <name evidence="1" type="primary">glmU</name>
    <name type="ordered locus">SFV_3756</name>
</gene>
<organism>
    <name type="scientific">Shigella flexneri serotype 5b (strain 8401)</name>
    <dbReference type="NCBI Taxonomy" id="373384"/>
    <lineage>
        <taxon>Bacteria</taxon>
        <taxon>Pseudomonadati</taxon>
        <taxon>Pseudomonadota</taxon>
        <taxon>Gammaproteobacteria</taxon>
        <taxon>Enterobacterales</taxon>
        <taxon>Enterobacteriaceae</taxon>
        <taxon>Shigella</taxon>
    </lineage>
</organism>